<protein>
    <recommendedName>
        <fullName evidence="1">Acetyl-coenzyme A synthetase</fullName>
        <shortName evidence="1">AcCoA synthetase</shortName>
        <shortName evidence="1">Acs</shortName>
        <ecNumber evidence="1">6.2.1.1</ecNumber>
    </recommendedName>
    <alternativeName>
        <fullName evidence="1">Acetate--CoA ligase</fullName>
    </alternativeName>
    <alternativeName>
        <fullName evidence="1">Acyl-activating enzyme</fullName>
    </alternativeName>
</protein>
<sequence>MSQIHKHPIPAAIAEHALITPEKYQHYYQQSVQNPDEFWGEQGKIIDWIKPYKTVKNTSFDPGHVSIRWFEDGTLNLAANCLDRHLAERGDQTAIIWEGDDPNQSKTVTYKQLHHDVCQFANVLKSLGIKKGDVVAIYMPMVPEAAVAMLACARIGAVHSVIFGGFSPDAVAGRIIDSHSKLVITADEGIRAGRAIPLKKNVDEALKNPAITSIKNVVVFQRTGNASYWEDGRDVWWHDLIKEASADCPPEEMNAEDPLFILYTSGSTGKPKGVVHTTGGYLVYAALTFKYVFDYHPGDIYWCTADVGWVTGHSYLLYGPLACGAITLMFEGVPNYPGVNRLSQVVDKHKVNILYTAPTAIRALMAEGDKAIEGTKRDSLRIMGSVGEPINPEAWEWYYNKIGNSKCPIVDTWWQTETGGFMITPLPGATELKAGSATRPFFGVQPALVDNLGNPQEGVAEGNLVITDSWPGQARTLFGDHDRFEQTYFSTFKGMYFSGDGARRDEDGYYWITGRVDDVLNVSGHRLGTAEIESALVAHPKIAEAAVVGVPHNIKGQAIYAYITLNHGEEPTPELYTEVRNWVRKEIGPLATPDILHWTDSLPKTRSGKIMRRILRKIATGDTSNLGDTSTLADPSVVEKLLEEKQSMQTPS</sequence>
<dbReference type="EC" id="6.2.1.1" evidence="1"/>
<dbReference type="EMBL" id="CP000720">
    <property type="protein sequence ID" value="ABS47621.1"/>
    <property type="molecule type" value="Genomic_DNA"/>
</dbReference>
<dbReference type="RefSeq" id="WP_011191563.1">
    <property type="nucleotide sequence ID" value="NC_009708.1"/>
</dbReference>
<dbReference type="SMR" id="A7FNG1"/>
<dbReference type="GeneID" id="49787698"/>
<dbReference type="KEGG" id="ypi:YpsIP31758_3835"/>
<dbReference type="HOGENOM" id="CLU_000022_3_6_6"/>
<dbReference type="Proteomes" id="UP000002412">
    <property type="component" value="Chromosome"/>
</dbReference>
<dbReference type="GO" id="GO:0005829">
    <property type="term" value="C:cytosol"/>
    <property type="evidence" value="ECO:0007669"/>
    <property type="project" value="TreeGrafter"/>
</dbReference>
<dbReference type="GO" id="GO:0003987">
    <property type="term" value="F:acetate-CoA ligase activity"/>
    <property type="evidence" value="ECO:0007669"/>
    <property type="project" value="UniProtKB-UniRule"/>
</dbReference>
<dbReference type="GO" id="GO:0016208">
    <property type="term" value="F:AMP binding"/>
    <property type="evidence" value="ECO:0007669"/>
    <property type="project" value="InterPro"/>
</dbReference>
<dbReference type="GO" id="GO:0005524">
    <property type="term" value="F:ATP binding"/>
    <property type="evidence" value="ECO:0007669"/>
    <property type="project" value="UniProtKB-KW"/>
</dbReference>
<dbReference type="GO" id="GO:0046872">
    <property type="term" value="F:metal ion binding"/>
    <property type="evidence" value="ECO:0007669"/>
    <property type="project" value="UniProtKB-KW"/>
</dbReference>
<dbReference type="GO" id="GO:0019427">
    <property type="term" value="P:acetyl-CoA biosynthetic process from acetate"/>
    <property type="evidence" value="ECO:0007669"/>
    <property type="project" value="UniProtKB-UniRule"/>
</dbReference>
<dbReference type="GO" id="GO:0006935">
    <property type="term" value="P:chemotaxis"/>
    <property type="evidence" value="ECO:0007669"/>
    <property type="project" value="UniProtKB-UniRule"/>
</dbReference>
<dbReference type="CDD" id="cd05966">
    <property type="entry name" value="ACS"/>
    <property type="match status" value="1"/>
</dbReference>
<dbReference type="FunFam" id="3.30.300.30:FF:000004">
    <property type="entry name" value="Acetyl-coenzyme A synthetase"/>
    <property type="match status" value="1"/>
</dbReference>
<dbReference type="FunFam" id="3.40.50.12780:FF:000001">
    <property type="entry name" value="Acetyl-coenzyme A synthetase"/>
    <property type="match status" value="1"/>
</dbReference>
<dbReference type="Gene3D" id="3.30.300.30">
    <property type="match status" value="1"/>
</dbReference>
<dbReference type="Gene3D" id="3.40.50.12780">
    <property type="entry name" value="N-terminal domain of ligase-like"/>
    <property type="match status" value="1"/>
</dbReference>
<dbReference type="HAMAP" id="MF_01123">
    <property type="entry name" value="Ac_CoA_synth"/>
    <property type="match status" value="1"/>
</dbReference>
<dbReference type="InterPro" id="IPR011904">
    <property type="entry name" value="Ac_CoA_lig"/>
</dbReference>
<dbReference type="InterPro" id="IPR032387">
    <property type="entry name" value="ACAS_N"/>
</dbReference>
<dbReference type="InterPro" id="IPR025110">
    <property type="entry name" value="AMP-bd_C"/>
</dbReference>
<dbReference type="InterPro" id="IPR045851">
    <property type="entry name" value="AMP-bd_C_sf"/>
</dbReference>
<dbReference type="InterPro" id="IPR020845">
    <property type="entry name" value="AMP-binding_CS"/>
</dbReference>
<dbReference type="InterPro" id="IPR000873">
    <property type="entry name" value="AMP-dep_synth/lig_dom"/>
</dbReference>
<dbReference type="InterPro" id="IPR042099">
    <property type="entry name" value="ANL_N_sf"/>
</dbReference>
<dbReference type="NCBIfam" id="TIGR02188">
    <property type="entry name" value="Ac_CoA_lig_AcsA"/>
    <property type="match status" value="1"/>
</dbReference>
<dbReference type="NCBIfam" id="NF001208">
    <property type="entry name" value="PRK00174.1"/>
    <property type="match status" value="1"/>
</dbReference>
<dbReference type="PANTHER" id="PTHR24095">
    <property type="entry name" value="ACETYL-COENZYME A SYNTHETASE"/>
    <property type="match status" value="1"/>
</dbReference>
<dbReference type="PANTHER" id="PTHR24095:SF243">
    <property type="entry name" value="ACETYL-COENZYME A SYNTHETASE"/>
    <property type="match status" value="1"/>
</dbReference>
<dbReference type="Pfam" id="PF16177">
    <property type="entry name" value="ACAS_N"/>
    <property type="match status" value="1"/>
</dbReference>
<dbReference type="Pfam" id="PF00501">
    <property type="entry name" value="AMP-binding"/>
    <property type="match status" value="1"/>
</dbReference>
<dbReference type="Pfam" id="PF13193">
    <property type="entry name" value="AMP-binding_C"/>
    <property type="match status" value="1"/>
</dbReference>
<dbReference type="SUPFAM" id="SSF56801">
    <property type="entry name" value="Acetyl-CoA synthetase-like"/>
    <property type="match status" value="1"/>
</dbReference>
<dbReference type="PROSITE" id="PS00455">
    <property type="entry name" value="AMP_BINDING"/>
    <property type="match status" value="1"/>
</dbReference>
<name>ACSA_YERP3</name>
<keyword id="KW-0007">Acetylation</keyword>
<keyword id="KW-0067">ATP-binding</keyword>
<keyword id="KW-0436">Ligase</keyword>
<keyword id="KW-0460">Magnesium</keyword>
<keyword id="KW-0479">Metal-binding</keyword>
<keyword id="KW-0547">Nucleotide-binding</keyword>
<feature type="chain" id="PRO_1000065333" description="Acetyl-coenzyme A synthetase">
    <location>
        <begin position="1"/>
        <end position="652"/>
    </location>
</feature>
<feature type="binding site" evidence="1">
    <location>
        <begin position="191"/>
        <end position="194"/>
    </location>
    <ligand>
        <name>CoA</name>
        <dbReference type="ChEBI" id="CHEBI:57287"/>
    </ligand>
</feature>
<feature type="binding site" evidence="1">
    <location>
        <position position="311"/>
    </location>
    <ligand>
        <name>CoA</name>
        <dbReference type="ChEBI" id="CHEBI:57287"/>
    </ligand>
</feature>
<feature type="binding site" evidence="1">
    <location>
        <position position="335"/>
    </location>
    <ligand>
        <name>CoA</name>
        <dbReference type="ChEBI" id="CHEBI:57287"/>
    </ligand>
</feature>
<feature type="binding site" evidence="1">
    <location>
        <begin position="387"/>
        <end position="389"/>
    </location>
    <ligand>
        <name>ATP</name>
        <dbReference type="ChEBI" id="CHEBI:30616"/>
    </ligand>
</feature>
<feature type="binding site" evidence="1">
    <location>
        <begin position="411"/>
        <end position="416"/>
    </location>
    <ligand>
        <name>ATP</name>
        <dbReference type="ChEBI" id="CHEBI:30616"/>
    </ligand>
</feature>
<feature type="binding site" evidence="1">
    <location>
        <position position="500"/>
    </location>
    <ligand>
        <name>ATP</name>
        <dbReference type="ChEBI" id="CHEBI:30616"/>
    </ligand>
</feature>
<feature type="binding site" evidence="1">
    <location>
        <position position="515"/>
    </location>
    <ligand>
        <name>ATP</name>
        <dbReference type="ChEBI" id="CHEBI:30616"/>
    </ligand>
</feature>
<feature type="binding site" evidence="1">
    <location>
        <position position="523"/>
    </location>
    <ligand>
        <name>CoA</name>
        <dbReference type="ChEBI" id="CHEBI:57287"/>
    </ligand>
</feature>
<feature type="binding site" evidence="1">
    <location>
        <position position="526"/>
    </location>
    <ligand>
        <name>ATP</name>
        <dbReference type="ChEBI" id="CHEBI:30616"/>
    </ligand>
</feature>
<feature type="binding site" evidence="1">
    <location>
        <position position="537"/>
    </location>
    <ligand>
        <name>Mg(2+)</name>
        <dbReference type="ChEBI" id="CHEBI:18420"/>
    </ligand>
</feature>
<feature type="binding site" evidence="1">
    <location>
        <position position="539"/>
    </location>
    <ligand>
        <name>Mg(2+)</name>
        <dbReference type="ChEBI" id="CHEBI:18420"/>
    </ligand>
</feature>
<feature type="binding site" evidence="1">
    <location>
        <position position="542"/>
    </location>
    <ligand>
        <name>Mg(2+)</name>
        <dbReference type="ChEBI" id="CHEBI:18420"/>
    </ligand>
</feature>
<feature type="binding site" evidence="1">
    <location>
        <position position="584"/>
    </location>
    <ligand>
        <name>CoA</name>
        <dbReference type="ChEBI" id="CHEBI:57287"/>
    </ligand>
</feature>
<feature type="modified residue" description="N6-acetyllysine" evidence="1">
    <location>
        <position position="609"/>
    </location>
</feature>
<gene>
    <name evidence="1" type="primary">acs</name>
    <name type="ordered locus">YpsIP31758_3835</name>
</gene>
<comment type="function">
    <text evidence="1">Catalyzes the conversion of acetate into acetyl-CoA (AcCoA), an essential intermediate at the junction of anabolic and catabolic pathways. Acs undergoes a two-step reaction. In the first half reaction, Acs combines acetate with ATP to form acetyl-adenylate (AcAMP) intermediate. In the second half reaction, it can then transfer the acetyl group from AcAMP to the sulfhydryl group of CoA, forming the product AcCoA.</text>
</comment>
<comment type="function">
    <text evidence="1">Enables the cell to use acetate during aerobic growth to generate energy via the TCA cycle, and biosynthetic compounds via the glyoxylate shunt. Acetylates CheY, the response regulator involved in flagellar movement and chemotaxis.</text>
</comment>
<comment type="catalytic activity">
    <reaction evidence="1">
        <text>acetate + ATP + CoA = acetyl-CoA + AMP + diphosphate</text>
        <dbReference type="Rhea" id="RHEA:23176"/>
        <dbReference type="ChEBI" id="CHEBI:30089"/>
        <dbReference type="ChEBI" id="CHEBI:30616"/>
        <dbReference type="ChEBI" id="CHEBI:33019"/>
        <dbReference type="ChEBI" id="CHEBI:57287"/>
        <dbReference type="ChEBI" id="CHEBI:57288"/>
        <dbReference type="ChEBI" id="CHEBI:456215"/>
        <dbReference type="EC" id="6.2.1.1"/>
    </reaction>
</comment>
<comment type="cofactor">
    <cofactor evidence="1">
        <name>Mg(2+)</name>
        <dbReference type="ChEBI" id="CHEBI:18420"/>
    </cofactor>
</comment>
<comment type="PTM">
    <text evidence="1">Acetylated. Deacetylation by the SIR2-homolog deacetylase activates the enzyme.</text>
</comment>
<comment type="similarity">
    <text evidence="1">Belongs to the ATP-dependent AMP-binding enzyme family.</text>
</comment>
<organism>
    <name type="scientific">Yersinia pseudotuberculosis serotype O:1b (strain IP 31758)</name>
    <dbReference type="NCBI Taxonomy" id="349747"/>
    <lineage>
        <taxon>Bacteria</taxon>
        <taxon>Pseudomonadati</taxon>
        <taxon>Pseudomonadota</taxon>
        <taxon>Gammaproteobacteria</taxon>
        <taxon>Enterobacterales</taxon>
        <taxon>Yersiniaceae</taxon>
        <taxon>Yersinia</taxon>
    </lineage>
</organism>
<reference key="1">
    <citation type="journal article" date="2007" name="PLoS Genet.">
        <title>The complete genome sequence of Yersinia pseudotuberculosis IP31758, the causative agent of Far East scarlet-like fever.</title>
        <authorList>
            <person name="Eppinger M."/>
            <person name="Rosovitz M.J."/>
            <person name="Fricke W.F."/>
            <person name="Rasko D.A."/>
            <person name="Kokorina G."/>
            <person name="Fayolle C."/>
            <person name="Lindler L.E."/>
            <person name="Carniel E."/>
            <person name="Ravel J."/>
        </authorList>
    </citation>
    <scope>NUCLEOTIDE SEQUENCE [LARGE SCALE GENOMIC DNA]</scope>
    <source>
        <strain>IP 31758</strain>
    </source>
</reference>
<proteinExistence type="inferred from homology"/>
<accession>A7FNG1</accession>
<evidence type="ECO:0000255" key="1">
    <source>
        <dbReference type="HAMAP-Rule" id="MF_01123"/>
    </source>
</evidence>